<dbReference type="EMBL" id="AAEY01000052">
    <property type="protein sequence ID" value="EAL18086.1"/>
    <property type="molecule type" value="Genomic_DNA"/>
</dbReference>
<dbReference type="RefSeq" id="XP_772733.1">
    <property type="nucleotide sequence ID" value="XM_767640.1"/>
</dbReference>
<dbReference type="GeneID" id="4938803"/>
<dbReference type="KEGG" id="cnb:CNBK1070"/>
<dbReference type="VEuPathDB" id="FungiDB:CNBK1070"/>
<dbReference type="HOGENOM" id="CLU_026794_1_0_1"/>
<dbReference type="OrthoDB" id="8324at5206"/>
<dbReference type="GO" id="GO:0005789">
    <property type="term" value="C:endoplasmic reticulum membrane"/>
    <property type="evidence" value="ECO:0007669"/>
    <property type="project" value="UniProtKB-SubCell"/>
</dbReference>
<dbReference type="GO" id="GO:0032865">
    <property type="term" value="C:ERMES complex"/>
    <property type="evidence" value="ECO:0007669"/>
    <property type="project" value="UniProtKB-UniRule"/>
</dbReference>
<dbReference type="GO" id="GO:0008289">
    <property type="term" value="F:lipid binding"/>
    <property type="evidence" value="ECO:0007669"/>
    <property type="project" value="UniProtKB-KW"/>
</dbReference>
<dbReference type="GO" id="GO:0000002">
    <property type="term" value="P:mitochondrial genome maintenance"/>
    <property type="evidence" value="ECO:0007669"/>
    <property type="project" value="UniProtKB-UniRule"/>
</dbReference>
<dbReference type="GO" id="GO:1990456">
    <property type="term" value="P:mitochondrion-endoplasmic reticulum membrane tethering"/>
    <property type="evidence" value="ECO:0007669"/>
    <property type="project" value="TreeGrafter"/>
</dbReference>
<dbReference type="GO" id="GO:0015914">
    <property type="term" value="P:phospholipid transport"/>
    <property type="evidence" value="ECO:0007669"/>
    <property type="project" value="TreeGrafter"/>
</dbReference>
<dbReference type="GO" id="GO:0045040">
    <property type="term" value="P:protein insertion into mitochondrial outer membrane"/>
    <property type="evidence" value="ECO:0007669"/>
    <property type="project" value="UniProtKB-UniRule"/>
</dbReference>
<dbReference type="CDD" id="cd21672">
    <property type="entry name" value="SMP_Mdm12"/>
    <property type="match status" value="1"/>
</dbReference>
<dbReference type="HAMAP" id="MF_03104">
    <property type="entry name" value="Mdm12"/>
    <property type="match status" value="1"/>
</dbReference>
<dbReference type="InterPro" id="IPR027532">
    <property type="entry name" value="Mdm12"/>
</dbReference>
<dbReference type="InterPro" id="IPR019411">
    <property type="entry name" value="MMM1_dom"/>
</dbReference>
<dbReference type="InterPro" id="IPR031468">
    <property type="entry name" value="SMP_LBD"/>
</dbReference>
<dbReference type="PANTHER" id="PTHR28204">
    <property type="entry name" value="MITOCHONDRIAL DISTRIBUTION AND MORPHOLOGY PROTEIN 12"/>
    <property type="match status" value="1"/>
</dbReference>
<dbReference type="PANTHER" id="PTHR28204:SF1">
    <property type="entry name" value="MITOCHONDRIAL DISTRIBUTION AND MORPHOLOGY PROTEIN 12"/>
    <property type="match status" value="1"/>
</dbReference>
<dbReference type="Pfam" id="PF10296">
    <property type="entry name" value="MMM1"/>
    <property type="match status" value="1"/>
</dbReference>
<dbReference type="PROSITE" id="PS51847">
    <property type="entry name" value="SMP"/>
    <property type="match status" value="1"/>
</dbReference>
<protein>
    <recommendedName>
        <fullName evidence="1">Mitochondrial distribution and morphology protein 12</fullName>
    </recommendedName>
    <alternativeName>
        <fullName evidence="1">Mitochondrial inheritance component MDM12</fullName>
    </alternativeName>
</protein>
<evidence type="ECO:0000255" key="1">
    <source>
        <dbReference type="HAMAP-Rule" id="MF_03104"/>
    </source>
</evidence>
<evidence type="ECO:0000256" key="2">
    <source>
        <dbReference type="SAM" id="MobiDB-lite"/>
    </source>
</evidence>
<accession>P0CO69</accession>
<accession>Q55K79</accession>
<accession>Q5K9C0</accession>
<gene>
    <name evidence="1" type="primary">MDM12</name>
    <name type="ordered locus">CNBK1070</name>
</gene>
<organism>
    <name type="scientific">Cryptococcus neoformans var. neoformans serotype D (strain B-3501A)</name>
    <name type="common">Filobasidiella neoformans</name>
    <dbReference type="NCBI Taxonomy" id="283643"/>
    <lineage>
        <taxon>Eukaryota</taxon>
        <taxon>Fungi</taxon>
        <taxon>Dikarya</taxon>
        <taxon>Basidiomycota</taxon>
        <taxon>Agaricomycotina</taxon>
        <taxon>Tremellomycetes</taxon>
        <taxon>Tremellales</taxon>
        <taxon>Cryptococcaceae</taxon>
        <taxon>Cryptococcus</taxon>
        <taxon>Cryptococcus neoformans species complex</taxon>
    </lineage>
</organism>
<comment type="function">
    <text evidence="1">Component of the ERMES/MDM complex, which serves as a molecular tether to connect the endoplasmic reticulum (ER) and mitochondria. Components of this complex are involved in the control of mitochondrial shape and protein biogenesis, and function in nonvesicular lipid trafficking between the ER and mitochondria. MDM12 is required for the interaction of the ER-resident membrane protein MMM1 and the outer mitochondrial membrane-resident beta-barrel protein MDM10. The MDM12-MMM1 subcomplex functions in the major beta-barrel assembly pathway that is responsible for biogenesis of all mitochondrial outer membrane beta-barrel proteins, and acts in a late step after the SAM complex. The MDM10-MDM12-MMM1 subcomplex further acts in the TOM40-specific pathway after the action of the MDM12-MMM1 complex. Essential for establishing and maintaining the structure of mitochondria and maintenance of mtDNA nucleoids.</text>
</comment>
<comment type="subunit">
    <text evidence="1">Component of the ER-mitochondria encounter structure (ERMES) or MDM complex, composed of MMM1, MDM10, MDM12 and MDM34. A MMM1 homodimer associates with one molecule of MDM12 on each side in a pairwise head-to-tail manner, and the SMP-LTD domains of MMM1 and MDM12 generate a continuous hydrophobic tunnel for phospholipid trafficking.</text>
</comment>
<comment type="subcellular location">
    <subcellularLocation>
        <location evidence="1">Mitochondrion outer membrane</location>
        <topology evidence="1">Peripheral membrane protein</topology>
        <orientation evidence="1">Cytoplasmic side</orientation>
    </subcellularLocation>
    <subcellularLocation>
        <location evidence="1">Endoplasmic reticulum membrane</location>
        <topology evidence="1">Peripheral membrane protein</topology>
        <orientation evidence="1">Cytoplasmic side</orientation>
    </subcellularLocation>
    <text evidence="1">The ERMES/MDM complex localizes to a few discrete foci (around 10 per single cell), that represent mitochondria-endoplasmic reticulum junctions. These foci are often found next to mtDNA nucleoids.</text>
</comment>
<comment type="domain">
    <text evidence="1">The SMP-LTD domain is a barrel-like domain that can bind various types of glycerophospholipids in its interior and mediate their transfer between two adjacent bilayers.</text>
</comment>
<comment type="similarity">
    <text evidence="1">Belongs to the MDM12 family.</text>
</comment>
<sequence>MSLDINWSLLSQPDESATDQLSESLIALLNAQLAEAHRPSFIGPITVTAFDFGNAGPDLEVKDIRDVWRVFDQGDDEGDFAEEEKQREKEREERDKLRNEALKSSLDGERYELVDRYSSTEGTSSFEYQPEYDIHEQHGDDYRIRGRRPLSYTFGYPHDRLAVHRSSSSRSFIPFPFDHPPPALHIPSTPGLNPSLVSHPISARFSRRPMSIAASAAPRPTPRRRPIEPSSTSPSPPAHPAGLPPKASSSSIPSLQLHLRLSHASDLHLTLLTSLQVNYPSALFMALPLKLSITGFQLNADIVMAYSGEKNRVHLTIVDDESNPAHKEDKQIPLGQRLLSNLQIESEIGHADAHVLRNVGKVERFIVDVVRKTLVDELVFPNFHTVAL</sequence>
<keyword id="KW-0256">Endoplasmic reticulum</keyword>
<keyword id="KW-0445">Lipid transport</keyword>
<keyword id="KW-0446">Lipid-binding</keyword>
<keyword id="KW-0472">Membrane</keyword>
<keyword id="KW-0496">Mitochondrion</keyword>
<keyword id="KW-1000">Mitochondrion outer membrane</keyword>
<keyword id="KW-0813">Transport</keyword>
<reference key="1">
    <citation type="journal article" date="2005" name="Science">
        <title>The genome of the basidiomycetous yeast and human pathogen Cryptococcus neoformans.</title>
        <authorList>
            <person name="Loftus B.J."/>
            <person name="Fung E."/>
            <person name="Roncaglia P."/>
            <person name="Rowley D."/>
            <person name="Amedeo P."/>
            <person name="Bruno D."/>
            <person name="Vamathevan J."/>
            <person name="Miranda M."/>
            <person name="Anderson I.J."/>
            <person name="Fraser J.A."/>
            <person name="Allen J.E."/>
            <person name="Bosdet I.E."/>
            <person name="Brent M.R."/>
            <person name="Chiu R."/>
            <person name="Doering T.L."/>
            <person name="Donlin M.J."/>
            <person name="D'Souza C.A."/>
            <person name="Fox D.S."/>
            <person name="Grinberg V."/>
            <person name="Fu J."/>
            <person name="Fukushima M."/>
            <person name="Haas B.J."/>
            <person name="Huang J.C."/>
            <person name="Janbon G."/>
            <person name="Jones S.J.M."/>
            <person name="Koo H.L."/>
            <person name="Krzywinski M.I."/>
            <person name="Kwon-Chung K.J."/>
            <person name="Lengeler K.B."/>
            <person name="Maiti R."/>
            <person name="Marra M.A."/>
            <person name="Marra R.E."/>
            <person name="Mathewson C.A."/>
            <person name="Mitchell T.G."/>
            <person name="Pertea M."/>
            <person name="Riggs F.R."/>
            <person name="Salzberg S.L."/>
            <person name="Schein J.E."/>
            <person name="Shvartsbeyn A."/>
            <person name="Shin H."/>
            <person name="Shumway M."/>
            <person name="Specht C.A."/>
            <person name="Suh B.B."/>
            <person name="Tenney A."/>
            <person name="Utterback T.R."/>
            <person name="Wickes B.L."/>
            <person name="Wortman J.R."/>
            <person name="Wye N.H."/>
            <person name="Kronstad J.W."/>
            <person name="Lodge J.K."/>
            <person name="Heitman J."/>
            <person name="Davis R.W."/>
            <person name="Fraser C.M."/>
            <person name="Hyman R.W."/>
        </authorList>
    </citation>
    <scope>NUCLEOTIDE SEQUENCE [LARGE SCALE GENOMIC DNA]</scope>
    <source>
        <strain>B-3501A</strain>
    </source>
</reference>
<feature type="chain" id="PRO_0000410140" description="Mitochondrial distribution and morphology protein 12">
    <location>
        <begin position="1"/>
        <end position="388"/>
    </location>
</feature>
<feature type="domain" description="SMP-LTD" evidence="1">
    <location>
        <begin position="1"/>
        <end position="388"/>
    </location>
</feature>
<feature type="region of interest" description="Disordered" evidence="2">
    <location>
        <begin position="75"/>
        <end position="101"/>
    </location>
</feature>
<feature type="region of interest" description="Disordered" evidence="2">
    <location>
        <begin position="209"/>
        <end position="251"/>
    </location>
</feature>
<feature type="compositionally biased region" description="Basic and acidic residues" evidence="2">
    <location>
        <begin position="83"/>
        <end position="101"/>
    </location>
</feature>
<feature type="compositionally biased region" description="Pro residues" evidence="2">
    <location>
        <begin position="234"/>
        <end position="243"/>
    </location>
</feature>
<proteinExistence type="inferred from homology"/>
<name>MDM12_CRYNB</name>